<accession>C6AJH2</accession>
<organism>
    <name type="scientific">Bifidobacterium animalis subsp. lactis (strain DSM 10140 / CCUG 37979 / JCM 10602 / LMG 18314 / NRRL B-41405 / UR1)</name>
    <dbReference type="NCBI Taxonomy" id="555970"/>
    <lineage>
        <taxon>Bacteria</taxon>
        <taxon>Bacillati</taxon>
        <taxon>Actinomycetota</taxon>
        <taxon>Actinomycetes</taxon>
        <taxon>Bifidobacteriales</taxon>
        <taxon>Bifidobacteriaceae</taxon>
        <taxon>Bifidobacterium</taxon>
    </lineage>
</organism>
<reference key="1">
    <citation type="journal article" date="2009" name="J. Bacteriol.">
        <title>Comparison of the complete genome sequences of Bifidobacterium animalis subsp. lactis DSM 10140 and Bl-04.</title>
        <authorList>
            <person name="Barrangou R."/>
            <person name="Briczinski E.P."/>
            <person name="Traeger L.L."/>
            <person name="Loquasto J.R."/>
            <person name="Richards M."/>
            <person name="Horvath P."/>
            <person name="Coute-Monvoisin A.-C."/>
            <person name="Leyer G."/>
            <person name="Rendulic S."/>
            <person name="Steele J.L."/>
            <person name="Broadbent J.R."/>
            <person name="Oberg T."/>
            <person name="Dudley E.G."/>
            <person name="Schuster S."/>
            <person name="Romero D.A."/>
            <person name="Roberts R.F."/>
        </authorList>
    </citation>
    <scope>NUCLEOTIDE SEQUENCE [LARGE SCALE GENOMIC DNA]</scope>
    <source>
        <strain>DSM 10140 / CCUG 37979 / JCM 10602 / LMG 18314 / NRRL B-41405 / UR1</strain>
    </source>
</reference>
<evidence type="ECO:0000255" key="1">
    <source>
        <dbReference type="HAMAP-Rule" id="MF_01007"/>
    </source>
</evidence>
<evidence type="ECO:0000256" key="2">
    <source>
        <dbReference type="SAM" id="MobiDB-lite"/>
    </source>
</evidence>
<feature type="chain" id="PRO_0000386748" description="Ribosomal RNA small subunit methyltransferase H">
    <location>
        <begin position="1"/>
        <end position="353"/>
    </location>
</feature>
<feature type="region of interest" description="Disordered" evidence="2">
    <location>
        <begin position="334"/>
        <end position="353"/>
    </location>
</feature>
<feature type="compositionally biased region" description="Basic residues" evidence="2">
    <location>
        <begin position="341"/>
        <end position="353"/>
    </location>
</feature>
<feature type="binding site" evidence="1">
    <location>
        <begin position="39"/>
        <end position="41"/>
    </location>
    <ligand>
        <name>S-adenosyl-L-methionine</name>
        <dbReference type="ChEBI" id="CHEBI:59789"/>
    </ligand>
</feature>
<feature type="binding site" evidence="1">
    <location>
        <position position="58"/>
    </location>
    <ligand>
        <name>S-adenosyl-L-methionine</name>
        <dbReference type="ChEBI" id="CHEBI:59789"/>
    </ligand>
</feature>
<feature type="binding site" evidence="1">
    <location>
        <position position="90"/>
    </location>
    <ligand>
        <name>S-adenosyl-L-methionine</name>
        <dbReference type="ChEBI" id="CHEBI:59789"/>
    </ligand>
</feature>
<feature type="binding site" evidence="1">
    <location>
        <position position="108"/>
    </location>
    <ligand>
        <name>S-adenosyl-L-methionine</name>
        <dbReference type="ChEBI" id="CHEBI:59789"/>
    </ligand>
</feature>
<feature type="binding site" evidence="1">
    <location>
        <position position="115"/>
    </location>
    <ligand>
        <name>S-adenosyl-L-methionine</name>
        <dbReference type="ChEBI" id="CHEBI:59789"/>
    </ligand>
</feature>
<name>RSMH_BIFAS</name>
<proteinExistence type="inferred from homology"/>
<gene>
    <name evidence="1" type="primary">rsmH</name>
    <name type="synonym">mraW</name>
    <name type="ordered locus">Balat_1206</name>
</gene>
<sequence length="353" mass="38853">MTDFSQIHKPVLLQECVDLVTPALHASDSVAVDCTLGLAGHTIAFLKAAPNATVIGIDRDEEALDKATARIAQEGLSARFVPVHAAFDQFDEVLRAQGVSRVQAVFMDLGLSSLQIDERERGFSYAHDAPLDMRMDTSQALTAREILATYDADRLAHIFKEYGEERFSKPIAKRIVQQRQSSPLETSSQLTALVDAVIPAARRGSGNPAKRVFQALRIEVNGELDKLRRTLPQIGLHLAVGGRLVVESYHSLEDRTVKNFMAQGLRVDAPADMPVIPPDMQPFFKALTKGAVKADAGEIAYNPRSASVRLRAVELTRPLPQRWVHAFELESQGSEDGVRGAHGHRRRTQARRG</sequence>
<dbReference type="EC" id="2.1.1.199" evidence="1"/>
<dbReference type="EMBL" id="CP001606">
    <property type="protein sequence ID" value="ACS48129.1"/>
    <property type="molecule type" value="Genomic_DNA"/>
</dbReference>
<dbReference type="RefSeq" id="WP_004218638.1">
    <property type="nucleotide sequence ID" value="NC_012815.1"/>
</dbReference>
<dbReference type="SMR" id="C6AJH2"/>
<dbReference type="GeneID" id="29696604"/>
<dbReference type="KEGG" id="blt:Balat_1206"/>
<dbReference type="HOGENOM" id="CLU_038422_0_0_11"/>
<dbReference type="BioCyc" id="BANI555970:G1GVE-1227-MONOMER"/>
<dbReference type="GO" id="GO:0005737">
    <property type="term" value="C:cytoplasm"/>
    <property type="evidence" value="ECO:0007669"/>
    <property type="project" value="UniProtKB-SubCell"/>
</dbReference>
<dbReference type="GO" id="GO:0071424">
    <property type="term" value="F:rRNA (cytosine-N4-)-methyltransferase activity"/>
    <property type="evidence" value="ECO:0007669"/>
    <property type="project" value="UniProtKB-UniRule"/>
</dbReference>
<dbReference type="GO" id="GO:0070475">
    <property type="term" value="P:rRNA base methylation"/>
    <property type="evidence" value="ECO:0007669"/>
    <property type="project" value="UniProtKB-UniRule"/>
</dbReference>
<dbReference type="Gene3D" id="1.10.150.170">
    <property type="entry name" value="Putative methyltransferase TM0872, insert domain"/>
    <property type="match status" value="1"/>
</dbReference>
<dbReference type="Gene3D" id="3.40.50.150">
    <property type="entry name" value="Vaccinia Virus protein VP39"/>
    <property type="match status" value="1"/>
</dbReference>
<dbReference type="HAMAP" id="MF_01007">
    <property type="entry name" value="16SrRNA_methyltr_H"/>
    <property type="match status" value="1"/>
</dbReference>
<dbReference type="InterPro" id="IPR002903">
    <property type="entry name" value="RsmH"/>
</dbReference>
<dbReference type="InterPro" id="IPR023397">
    <property type="entry name" value="SAM-dep_MeTrfase_MraW_recog"/>
</dbReference>
<dbReference type="InterPro" id="IPR029063">
    <property type="entry name" value="SAM-dependent_MTases_sf"/>
</dbReference>
<dbReference type="NCBIfam" id="TIGR00006">
    <property type="entry name" value="16S rRNA (cytosine(1402)-N(4))-methyltransferase RsmH"/>
    <property type="match status" value="1"/>
</dbReference>
<dbReference type="PANTHER" id="PTHR11265:SF0">
    <property type="entry name" value="12S RRNA N4-METHYLCYTIDINE METHYLTRANSFERASE"/>
    <property type="match status" value="1"/>
</dbReference>
<dbReference type="PANTHER" id="PTHR11265">
    <property type="entry name" value="S-ADENOSYL-METHYLTRANSFERASE MRAW"/>
    <property type="match status" value="1"/>
</dbReference>
<dbReference type="Pfam" id="PF01795">
    <property type="entry name" value="Methyltransf_5"/>
    <property type="match status" value="1"/>
</dbReference>
<dbReference type="PIRSF" id="PIRSF004486">
    <property type="entry name" value="MraW"/>
    <property type="match status" value="1"/>
</dbReference>
<dbReference type="SUPFAM" id="SSF81799">
    <property type="entry name" value="Putative methyltransferase TM0872, insert domain"/>
    <property type="match status" value="1"/>
</dbReference>
<dbReference type="SUPFAM" id="SSF53335">
    <property type="entry name" value="S-adenosyl-L-methionine-dependent methyltransferases"/>
    <property type="match status" value="1"/>
</dbReference>
<keyword id="KW-0963">Cytoplasm</keyword>
<keyword id="KW-0489">Methyltransferase</keyword>
<keyword id="KW-0698">rRNA processing</keyword>
<keyword id="KW-0949">S-adenosyl-L-methionine</keyword>
<keyword id="KW-0808">Transferase</keyword>
<protein>
    <recommendedName>
        <fullName evidence="1">Ribosomal RNA small subunit methyltransferase H</fullName>
        <ecNumber evidence="1">2.1.1.199</ecNumber>
    </recommendedName>
    <alternativeName>
        <fullName evidence="1">16S rRNA m(4)C1402 methyltransferase</fullName>
    </alternativeName>
    <alternativeName>
        <fullName evidence="1">rRNA (cytosine-N(4)-)-methyltransferase RsmH</fullName>
    </alternativeName>
</protein>
<comment type="function">
    <text evidence="1">Specifically methylates the N4 position of cytidine in position 1402 (C1402) of 16S rRNA.</text>
</comment>
<comment type="catalytic activity">
    <reaction evidence="1">
        <text>cytidine(1402) in 16S rRNA + S-adenosyl-L-methionine = N(4)-methylcytidine(1402) in 16S rRNA + S-adenosyl-L-homocysteine + H(+)</text>
        <dbReference type="Rhea" id="RHEA:42928"/>
        <dbReference type="Rhea" id="RHEA-COMP:10286"/>
        <dbReference type="Rhea" id="RHEA-COMP:10287"/>
        <dbReference type="ChEBI" id="CHEBI:15378"/>
        <dbReference type="ChEBI" id="CHEBI:57856"/>
        <dbReference type="ChEBI" id="CHEBI:59789"/>
        <dbReference type="ChEBI" id="CHEBI:74506"/>
        <dbReference type="ChEBI" id="CHEBI:82748"/>
        <dbReference type="EC" id="2.1.1.199"/>
    </reaction>
</comment>
<comment type="subcellular location">
    <subcellularLocation>
        <location evidence="1">Cytoplasm</location>
    </subcellularLocation>
</comment>
<comment type="similarity">
    <text evidence="1">Belongs to the methyltransferase superfamily. RsmH family.</text>
</comment>